<proteinExistence type="inferred from homology"/>
<protein>
    <recommendedName>
        <fullName evidence="1">Large ribosomal subunit protein uL23</fullName>
    </recommendedName>
    <alternativeName>
        <fullName evidence="2">50S ribosomal protein L23</fullName>
    </alternativeName>
</protein>
<dbReference type="EMBL" id="CP001205">
    <property type="protein sequence ID" value="ACK74814.1"/>
    <property type="molecule type" value="Genomic_DNA"/>
</dbReference>
<dbReference type="RefSeq" id="WP_002557071.1">
    <property type="nucleotide sequence ID" value="NC_011728.1"/>
</dbReference>
<dbReference type="SMR" id="B7J245"/>
<dbReference type="GeneID" id="77265327"/>
<dbReference type="KEGG" id="bbz:BbuZS7_0491"/>
<dbReference type="HOGENOM" id="CLU_037562_3_1_12"/>
<dbReference type="Proteomes" id="UP000006901">
    <property type="component" value="Chromosome"/>
</dbReference>
<dbReference type="GO" id="GO:1990904">
    <property type="term" value="C:ribonucleoprotein complex"/>
    <property type="evidence" value="ECO:0007669"/>
    <property type="project" value="UniProtKB-KW"/>
</dbReference>
<dbReference type="GO" id="GO:0005840">
    <property type="term" value="C:ribosome"/>
    <property type="evidence" value="ECO:0007669"/>
    <property type="project" value="UniProtKB-KW"/>
</dbReference>
<dbReference type="GO" id="GO:0019843">
    <property type="term" value="F:rRNA binding"/>
    <property type="evidence" value="ECO:0007669"/>
    <property type="project" value="UniProtKB-UniRule"/>
</dbReference>
<dbReference type="GO" id="GO:0003735">
    <property type="term" value="F:structural constituent of ribosome"/>
    <property type="evidence" value="ECO:0007669"/>
    <property type="project" value="InterPro"/>
</dbReference>
<dbReference type="GO" id="GO:0006412">
    <property type="term" value="P:translation"/>
    <property type="evidence" value="ECO:0007669"/>
    <property type="project" value="UniProtKB-UniRule"/>
</dbReference>
<dbReference type="Gene3D" id="3.30.70.330">
    <property type="match status" value="1"/>
</dbReference>
<dbReference type="HAMAP" id="MF_01369_B">
    <property type="entry name" value="Ribosomal_uL23_B"/>
    <property type="match status" value="1"/>
</dbReference>
<dbReference type="InterPro" id="IPR012677">
    <property type="entry name" value="Nucleotide-bd_a/b_plait_sf"/>
</dbReference>
<dbReference type="InterPro" id="IPR013025">
    <property type="entry name" value="Ribosomal_uL23-like"/>
</dbReference>
<dbReference type="InterPro" id="IPR012678">
    <property type="entry name" value="Ribosomal_uL23/eL15/eS24_sf"/>
</dbReference>
<dbReference type="NCBIfam" id="NF004363">
    <property type="entry name" value="PRK05738.2-4"/>
    <property type="match status" value="1"/>
</dbReference>
<dbReference type="PANTHER" id="PTHR11620">
    <property type="entry name" value="60S RIBOSOMAL PROTEIN L23A"/>
    <property type="match status" value="1"/>
</dbReference>
<dbReference type="Pfam" id="PF00276">
    <property type="entry name" value="Ribosomal_L23"/>
    <property type="match status" value="1"/>
</dbReference>
<dbReference type="SUPFAM" id="SSF54189">
    <property type="entry name" value="Ribosomal proteins S24e, L23 and L15e"/>
    <property type="match status" value="1"/>
</dbReference>
<feature type="chain" id="PRO_1000144535" description="Large ribosomal subunit protein uL23">
    <location>
        <begin position="1"/>
        <end position="98"/>
    </location>
</feature>
<keyword id="KW-0687">Ribonucleoprotein</keyword>
<keyword id="KW-0689">Ribosomal protein</keyword>
<keyword id="KW-0694">RNA-binding</keyword>
<keyword id="KW-0699">rRNA-binding</keyword>
<name>RL23_BORBZ</name>
<gene>
    <name evidence="1" type="primary">rplW</name>
    <name type="ordered locus">BbuZS7_0491</name>
</gene>
<comment type="function">
    <text evidence="1">One of the early assembly proteins it binds 23S rRNA. One of the proteins that surrounds the polypeptide exit tunnel on the outside of the ribosome. Forms the main docking site for trigger factor binding to the ribosome.</text>
</comment>
<comment type="subunit">
    <text evidence="1">Part of the 50S ribosomal subunit. Contacts protein L29, and trigger factor when it is bound to the ribosome.</text>
</comment>
<comment type="similarity">
    <text evidence="1">Belongs to the universal ribosomal protein uL23 family.</text>
</comment>
<evidence type="ECO:0000255" key="1">
    <source>
        <dbReference type="HAMAP-Rule" id="MF_01369"/>
    </source>
</evidence>
<evidence type="ECO:0000305" key="2"/>
<sequence length="98" mass="11143">MKAYDIIVSPMLTEKTNTQRESINVYVFKVNKRANKKEVGAAIKELFNVTPVSCNLLNIKSKAKVVVSRKGYPIGKGKTSSWKKAYVYLKKEDKIDIF</sequence>
<accession>B7J245</accession>
<reference key="1">
    <citation type="journal article" date="2011" name="J. Bacteriol.">
        <title>Whole-genome sequences of thirteen isolates of Borrelia burgdorferi.</title>
        <authorList>
            <person name="Schutzer S.E."/>
            <person name="Fraser-Liggett C.M."/>
            <person name="Casjens S.R."/>
            <person name="Qiu W.G."/>
            <person name="Dunn J.J."/>
            <person name="Mongodin E.F."/>
            <person name="Luft B.J."/>
        </authorList>
    </citation>
    <scope>NUCLEOTIDE SEQUENCE [LARGE SCALE GENOMIC DNA]</scope>
    <source>
        <strain>ZS7</strain>
    </source>
</reference>
<organism>
    <name type="scientific">Borreliella burgdorferi (strain ZS7)</name>
    <name type="common">Borrelia burgdorferi</name>
    <dbReference type="NCBI Taxonomy" id="445985"/>
    <lineage>
        <taxon>Bacteria</taxon>
        <taxon>Pseudomonadati</taxon>
        <taxon>Spirochaetota</taxon>
        <taxon>Spirochaetia</taxon>
        <taxon>Spirochaetales</taxon>
        <taxon>Borreliaceae</taxon>
        <taxon>Borreliella</taxon>
    </lineage>
</organism>